<protein>
    <recommendedName>
        <fullName>BMP/retinoic acid-inducible neural-specific protein 3</fullName>
    </recommendedName>
</protein>
<evidence type="ECO:0000250" key="1"/>
<evidence type="ECO:0000255" key="2"/>
<evidence type="ECO:0000269" key="3">
    <source>
    </source>
</evidence>
<evidence type="ECO:0000269" key="4">
    <source>
    </source>
</evidence>
<evidence type="ECO:0000305" key="5"/>
<reference key="1">
    <citation type="journal article" date="2004" name="Brain Res. Mol. Brain Res.">
        <title>Identification and characterization of novel developmentally regulated neural-specific proteins, BRINP family.</title>
        <authorList>
            <person name="Kawano H."/>
            <person name="Nakatani T."/>
            <person name="Mori T."/>
            <person name="Ueno S."/>
            <person name="Fukaya M."/>
            <person name="Abe A."/>
            <person name="Kobayashi M."/>
            <person name="Toda F."/>
            <person name="Watanabe M."/>
            <person name="Matsuoka I."/>
        </authorList>
    </citation>
    <scope>NUCLEOTIDE SEQUENCE [MRNA]</scope>
    <scope>TISSUE SPECIFICITY</scope>
    <scope>DEVELOPMENTAL STAGE</scope>
</reference>
<reference key="2">
    <citation type="journal article" date="2007" name="Endocrinology">
        <title>Bone morphogenetic protein and retinoic acid-inducible neural specific protein-3 is expressed in gonadotrope cell pituitary adenomas and induces proliferation, migration, and invasion.</title>
        <authorList>
            <person name="Shorts-Cary L."/>
            <person name="Xu M."/>
            <person name="Ertel J."/>
            <person name="Kleinschmidt-Demasters B.K."/>
            <person name="Lillehei K."/>
            <person name="Matsuoka I."/>
            <person name="Nielsen-Preiss S."/>
            <person name="Wierman M.E."/>
        </authorList>
    </citation>
    <scope>SUBCELLULAR LOCATION</scope>
</reference>
<sequence length="766" mass="88497">MIWRRRAGAELSSLMALWEWIVLSLHCWVLAVAAVSDQHATSPFDWLLSDKGPFHRSQEYTDFVDRSRQGFSTRYKIYREFGRWKVNNLAVERRNFLGSPLPLAPEFFRNIRLLGRRPTLQQITENLIKKYGTHFLLSATLGGEESLTIFVDKRKLSKRPEGSETSTNSSSVTLETLHQLAASYFIDRDSTLRRLHHIQIASTAIKVTETRTGPLGCSNYDNLDSVSSVLVQSPENKIQLQGLQVLLPDYLQERFVQAALSYIACNSEGEFICKENDCWCLCGPKFPECNCPSMDIQAMEENLLRITETWKAYNSDFEDSDEFKFFMKRLPMNYFLNTSTIMHLWTMDSNFQRRYEQLENSMKQLFLKAHRIVHKLFSLSKRCHKQPLISLPRQRTSTYWLTRIQSFLYCNENGLLGSFSEETHSCTCPNDQVVCTAFLPCTVGDASACLTCAPDNRTRCGTCNTGYMLSQGLCKPEVAESTDHYIGFETDLQDLEMKYLLQKTDRRIEVHAIFISNDMRLNSWFDPSWRKRMLLTLKSNKYKSSLVHMILGLSLQICLTKNSTLEPVLAVYINPFGGSHSESWFMPVSESSFPDWERTKLDLPLQCYNWTLTLGNKWKTFFETVHIYLRSRIKANGPNSNESIYYEPLEFIDPSRNLGYMKINNIQVFGYSMHFDPEAIRDLILQLDYPYTQGSQDSALLQLLEIRDRVNKLSPPGQRRLDLFSCLLRHRLKLSTSEVVRIQSALQAFNAKLPNTVDYDTTKLCS</sequence>
<gene>
    <name type="primary">Brinp3</name>
    <name type="synonym">Fam5c</name>
</gene>
<proteinExistence type="evidence at transcript level"/>
<dbReference type="EMBL" id="AB077854">
    <property type="protein sequence ID" value="BAC03100.1"/>
    <property type="molecule type" value="mRNA"/>
</dbReference>
<dbReference type="RefSeq" id="NP_775144.1">
    <property type="nucleotide sequence ID" value="NM_173121.2"/>
</dbReference>
<dbReference type="RefSeq" id="XP_017454169.1">
    <property type="nucleotide sequence ID" value="XM_017598680.3"/>
</dbReference>
<dbReference type="RefSeq" id="XP_017454170.1">
    <property type="nucleotide sequence ID" value="XM_017598681.1"/>
</dbReference>
<dbReference type="RefSeq" id="XP_017454171.1">
    <property type="nucleotide sequence ID" value="XM_017598682.3"/>
</dbReference>
<dbReference type="RefSeq" id="XP_017454172.1">
    <property type="nucleotide sequence ID" value="XM_017598683.1"/>
</dbReference>
<dbReference type="RefSeq" id="XP_017454173.1">
    <property type="nucleotide sequence ID" value="XM_017598684.1"/>
</dbReference>
<dbReference type="RefSeq" id="XP_017454174.1">
    <property type="nucleotide sequence ID" value="XM_017598685.1"/>
</dbReference>
<dbReference type="RefSeq" id="XP_038946344.1">
    <property type="nucleotide sequence ID" value="XM_039090416.2"/>
</dbReference>
<dbReference type="FunCoup" id="Q8K1M7">
    <property type="interactions" value="867"/>
</dbReference>
<dbReference type="STRING" id="10116.ENSRNOP00000003788"/>
<dbReference type="GlyCosmos" id="Q8K1M7">
    <property type="glycosylation" value="6 sites, No reported glycans"/>
</dbReference>
<dbReference type="GlyGen" id="Q8K1M7">
    <property type="glycosylation" value="6 sites"/>
</dbReference>
<dbReference type="PhosphoSitePlus" id="Q8K1M7"/>
<dbReference type="PaxDb" id="10116-ENSRNOP00000003788"/>
<dbReference type="Ensembl" id="ENSRNOT00000003788.4">
    <property type="protein sequence ID" value="ENSRNOP00000003788.2"/>
    <property type="gene ID" value="ENSRNOG00000002811.4"/>
</dbReference>
<dbReference type="GeneID" id="286901"/>
<dbReference type="KEGG" id="rno:286901"/>
<dbReference type="UCSC" id="RGD:708421">
    <property type="organism name" value="rat"/>
</dbReference>
<dbReference type="AGR" id="RGD:708421"/>
<dbReference type="CTD" id="339479"/>
<dbReference type="RGD" id="708421">
    <property type="gene designation" value="Brinp3"/>
</dbReference>
<dbReference type="eggNOG" id="ENOG502QQZS">
    <property type="taxonomic scope" value="Eukaryota"/>
</dbReference>
<dbReference type="GeneTree" id="ENSGT00940000156099"/>
<dbReference type="HOGENOM" id="CLU_018347_0_0_1"/>
<dbReference type="InParanoid" id="Q8K1M7"/>
<dbReference type="OMA" id="CQCGPRF"/>
<dbReference type="OrthoDB" id="10013872at2759"/>
<dbReference type="PhylomeDB" id="Q8K1M7"/>
<dbReference type="TreeFam" id="TF331600"/>
<dbReference type="PRO" id="PR:Q8K1M7"/>
<dbReference type="Proteomes" id="UP000002494">
    <property type="component" value="Chromosome 13"/>
</dbReference>
<dbReference type="Bgee" id="ENSRNOG00000002811">
    <property type="expression patterns" value="Expressed in frontal cortex and 2 other cell types or tissues"/>
</dbReference>
<dbReference type="GO" id="GO:0005737">
    <property type="term" value="C:cytoplasm"/>
    <property type="evidence" value="ECO:0000318"/>
    <property type="project" value="GO_Central"/>
</dbReference>
<dbReference type="GO" id="GO:0030425">
    <property type="term" value="C:dendrite"/>
    <property type="evidence" value="ECO:0000314"/>
    <property type="project" value="RGD"/>
</dbReference>
<dbReference type="GO" id="GO:0005576">
    <property type="term" value="C:extracellular region"/>
    <property type="evidence" value="ECO:0007669"/>
    <property type="project" value="UniProtKB-SubCell"/>
</dbReference>
<dbReference type="GO" id="GO:0005739">
    <property type="term" value="C:mitochondrion"/>
    <property type="evidence" value="ECO:0007669"/>
    <property type="project" value="UniProtKB-SubCell"/>
</dbReference>
<dbReference type="GO" id="GO:0043025">
    <property type="term" value="C:neuronal cell body"/>
    <property type="evidence" value="ECO:0000314"/>
    <property type="project" value="RGD"/>
</dbReference>
<dbReference type="GO" id="GO:0071300">
    <property type="term" value="P:cellular response to retinoic acid"/>
    <property type="evidence" value="ECO:0000250"/>
    <property type="project" value="UniProtKB"/>
</dbReference>
<dbReference type="GO" id="GO:0021953">
    <property type="term" value="P:central nervous system neuron differentiation"/>
    <property type="evidence" value="ECO:0000250"/>
    <property type="project" value="UniProtKB"/>
</dbReference>
<dbReference type="GO" id="GO:0035640">
    <property type="term" value="P:exploration behavior"/>
    <property type="evidence" value="ECO:0000266"/>
    <property type="project" value="RGD"/>
</dbReference>
<dbReference type="GO" id="GO:0035264">
    <property type="term" value="P:multicellular organism growth"/>
    <property type="evidence" value="ECO:0000266"/>
    <property type="project" value="RGD"/>
</dbReference>
<dbReference type="GO" id="GO:0045786">
    <property type="term" value="P:negative regulation of cell cycle"/>
    <property type="evidence" value="ECO:0000315"/>
    <property type="project" value="RGD"/>
</dbReference>
<dbReference type="GO" id="GO:0045930">
    <property type="term" value="P:negative regulation of mitotic cell cycle"/>
    <property type="evidence" value="ECO:0000250"/>
    <property type="project" value="UniProtKB"/>
</dbReference>
<dbReference type="GO" id="GO:0007399">
    <property type="term" value="P:nervous system development"/>
    <property type="evidence" value="ECO:0000270"/>
    <property type="project" value="RGD"/>
</dbReference>
<dbReference type="GO" id="GO:0045666">
    <property type="term" value="P:positive regulation of neuron differentiation"/>
    <property type="evidence" value="ECO:0007669"/>
    <property type="project" value="InterPro"/>
</dbReference>
<dbReference type="GO" id="GO:0035176">
    <property type="term" value="P:social behavior"/>
    <property type="evidence" value="ECO:0000266"/>
    <property type="project" value="RGD"/>
</dbReference>
<dbReference type="InterPro" id="IPR033237">
    <property type="entry name" value="BRINP"/>
</dbReference>
<dbReference type="InterPro" id="IPR009030">
    <property type="entry name" value="Growth_fac_rcpt_cys_sf"/>
</dbReference>
<dbReference type="InterPro" id="IPR020864">
    <property type="entry name" value="MACPF"/>
</dbReference>
<dbReference type="PANTHER" id="PTHR15564:SF2">
    <property type="entry name" value="BMP_RETINOIC ACID-INDUCIBLE NEURAL-SPECIFIC PROTEIN 3"/>
    <property type="match status" value="1"/>
</dbReference>
<dbReference type="PANTHER" id="PTHR15564">
    <property type="entry name" value="MACPF DOMAIN-CONTAINING PROTEIN"/>
    <property type="match status" value="1"/>
</dbReference>
<dbReference type="Pfam" id="PF19052">
    <property type="entry name" value="BRINP"/>
    <property type="match status" value="1"/>
</dbReference>
<dbReference type="Pfam" id="PF25415">
    <property type="entry name" value="EGF_BRNP1-3"/>
    <property type="match status" value="1"/>
</dbReference>
<dbReference type="Pfam" id="PF01823">
    <property type="entry name" value="MACPF"/>
    <property type="match status" value="1"/>
</dbReference>
<dbReference type="SMART" id="SM00457">
    <property type="entry name" value="MACPF"/>
    <property type="match status" value="1"/>
</dbReference>
<dbReference type="SUPFAM" id="SSF57184">
    <property type="entry name" value="Growth factor receptor domain"/>
    <property type="match status" value="1"/>
</dbReference>
<name>BRNP3_RAT</name>
<organism>
    <name type="scientific">Rattus norvegicus</name>
    <name type="common">Rat</name>
    <dbReference type="NCBI Taxonomy" id="10116"/>
    <lineage>
        <taxon>Eukaryota</taxon>
        <taxon>Metazoa</taxon>
        <taxon>Chordata</taxon>
        <taxon>Craniata</taxon>
        <taxon>Vertebrata</taxon>
        <taxon>Euteleostomi</taxon>
        <taxon>Mammalia</taxon>
        <taxon>Eutheria</taxon>
        <taxon>Euarchontoglires</taxon>
        <taxon>Glires</taxon>
        <taxon>Rodentia</taxon>
        <taxon>Myomorpha</taxon>
        <taxon>Muroidea</taxon>
        <taxon>Muridae</taxon>
        <taxon>Murinae</taxon>
        <taxon>Rattus</taxon>
    </lineage>
</organism>
<accession>Q8K1M7</accession>
<feature type="signal peptide" evidence="2">
    <location>
        <begin position="1"/>
        <end position="33"/>
    </location>
</feature>
<feature type="chain" id="PRO_0000045776" description="BMP/retinoic acid-inducible neural-specific protein 3">
    <location>
        <begin position="34"/>
        <end position="766"/>
    </location>
</feature>
<feature type="domain" description="MACPF">
    <location>
        <begin position="74"/>
        <end position="264"/>
    </location>
</feature>
<feature type="glycosylation site" description="N-linked (GlcNAc...) asparagine" evidence="2">
    <location>
        <position position="168"/>
    </location>
</feature>
<feature type="glycosylation site" description="N-linked (GlcNAc...) asparagine" evidence="2">
    <location>
        <position position="337"/>
    </location>
</feature>
<feature type="glycosylation site" description="N-linked (GlcNAc...) asparagine" evidence="2">
    <location>
        <position position="456"/>
    </location>
</feature>
<feature type="glycosylation site" description="N-linked (GlcNAc...) asparagine" evidence="2">
    <location>
        <position position="562"/>
    </location>
</feature>
<feature type="glycosylation site" description="N-linked (GlcNAc...) asparagine" evidence="2">
    <location>
        <position position="609"/>
    </location>
</feature>
<feature type="glycosylation site" description="N-linked (GlcNAc...) asparagine" evidence="2">
    <location>
        <position position="641"/>
    </location>
</feature>
<keyword id="KW-0131">Cell cycle</keyword>
<keyword id="KW-0325">Glycoprotein</keyword>
<keyword id="KW-0338">Growth arrest</keyword>
<keyword id="KW-0496">Mitochondrion</keyword>
<keyword id="KW-1185">Reference proteome</keyword>
<keyword id="KW-0964">Secreted</keyword>
<keyword id="KW-0732">Signal</keyword>
<comment type="function">
    <text evidence="1">Inhibits neuronal cell proliferation by negative regulation of the cell cycle transition. Promotes pituitary gonadotrope cell proliferation, migration and invasion, when overexpressed. May play a role in cell pituitary tumor development (By similarity).</text>
</comment>
<comment type="subcellular location">
    <subcellularLocation>
        <location evidence="5">Secreted</location>
    </subcellularLocation>
    <subcellularLocation>
        <location evidence="4">Mitochondrion</location>
    </subcellularLocation>
</comment>
<comment type="tissue specificity">
    <text evidence="3">Expressed in olfactory bulb, cerebellum and neuronal layers in hippocampus.</text>
</comment>
<comment type="developmental stage">
    <text evidence="3">Expressed from 11.5 dpc.</text>
</comment>
<comment type="similarity">
    <text evidence="5">Belongs to the BRINP family.</text>
</comment>